<evidence type="ECO:0000255" key="1"/>
<evidence type="ECO:0000305" key="2"/>
<sequence length="273" mass="29413">MMAARMMAAGLAATALSAHAFRIPTPGEQDARIQTVPYHPEEVVLVRAWNGYVTRIVFDEQEKIIDVAAGFADGWQFSPEGNVLYIKAKSFPAQGSPAQAPEPGLWNTNLLVKTDRRLYDFDLVLASADAATPQALQRSRMAYRLQFRYPAAPQAASRASPVGPAVPAGALNRRYAMQVGNGSDGIAPIAAYDDGRHTWLTFRPGQPFPAVFAVAPDGTETLVNLHIDNQSLVIHRVAPVLMLRSGASVIRIVNQNGDASASPAFECHAEPAL</sequence>
<proteinExistence type="inferred from homology"/>
<name>PTLF_BORBR</name>
<feature type="signal peptide" evidence="1">
    <location>
        <begin position="1"/>
        <end position="20"/>
    </location>
</feature>
<feature type="chain" id="PRO_0000287413" description="Type IV secretion system protein PtlF homolog">
    <location>
        <begin position="21"/>
        <end position="273"/>
    </location>
</feature>
<organism>
    <name type="scientific">Bordetella bronchiseptica (strain ATCC BAA-588 / NCTC 13252 / RB50)</name>
    <name type="common">Alcaligenes bronchisepticus</name>
    <dbReference type="NCBI Taxonomy" id="257310"/>
    <lineage>
        <taxon>Bacteria</taxon>
        <taxon>Pseudomonadati</taxon>
        <taxon>Pseudomonadota</taxon>
        <taxon>Betaproteobacteria</taxon>
        <taxon>Burkholderiales</taxon>
        <taxon>Alcaligenaceae</taxon>
        <taxon>Bordetella</taxon>
    </lineage>
</organism>
<comment type="subcellular location">
    <subcellularLocation>
        <location evidence="2">Cell outer membrane</location>
    </subcellularLocation>
</comment>
<comment type="miscellaneous">
    <text>B.bronchiseptica strain Bb55 harboring a functional ptx-ptl promoter from B.pertussis produces the PtlF protein in a stable form. Is also able to produce and secrete efficiently the pertussis toxin (PTX).</text>
</comment>
<comment type="similarity">
    <text evidence="2">Belongs to the TrbG/VirB9 family.</text>
</comment>
<comment type="caution">
    <text evidence="2">B.parapertussis and B.bronchiseptica seem not to produce the pertussis toxin (S1, S2, S4, S5 and S3) and ptl proteins (PtlA, PtlB, PtlC, PtlD, PtlE, PtlF, PtlG, PtlH and PtlI) in vivo due to changes in the promoter region of the ptx-ptl operon. However, it is possible that their promoter is active under certain, as-yet-undefined conditions and that B.parapertussis and B.bronchiseptica are therefore capable of producing these proteins.</text>
</comment>
<protein>
    <recommendedName>
        <fullName>Type IV secretion system protein PtlF homolog</fullName>
    </recommendedName>
</protein>
<reference key="1">
    <citation type="journal article" date="2003" name="Nat. Genet.">
        <title>Comparative analysis of the genome sequences of Bordetella pertussis, Bordetella parapertussis and Bordetella bronchiseptica.</title>
        <authorList>
            <person name="Parkhill J."/>
            <person name="Sebaihia M."/>
            <person name="Preston A."/>
            <person name="Murphy L.D."/>
            <person name="Thomson N.R."/>
            <person name="Harris D.E."/>
            <person name="Holden M.T.G."/>
            <person name="Churcher C.M."/>
            <person name="Bentley S.D."/>
            <person name="Mungall K.L."/>
            <person name="Cerdeno-Tarraga A.-M."/>
            <person name="Temple L."/>
            <person name="James K.D."/>
            <person name="Harris B."/>
            <person name="Quail M.A."/>
            <person name="Achtman M."/>
            <person name="Atkin R."/>
            <person name="Baker S."/>
            <person name="Basham D."/>
            <person name="Bason N."/>
            <person name="Cherevach I."/>
            <person name="Chillingworth T."/>
            <person name="Collins M."/>
            <person name="Cronin A."/>
            <person name="Davis P."/>
            <person name="Doggett J."/>
            <person name="Feltwell T."/>
            <person name="Goble A."/>
            <person name="Hamlin N."/>
            <person name="Hauser H."/>
            <person name="Holroyd S."/>
            <person name="Jagels K."/>
            <person name="Leather S."/>
            <person name="Moule S."/>
            <person name="Norberczak H."/>
            <person name="O'Neil S."/>
            <person name="Ormond D."/>
            <person name="Price C."/>
            <person name="Rabbinowitsch E."/>
            <person name="Rutter S."/>
            <person name="Sanders M."/>
            <person name="Saunders D."/>
            <person name="Seeger K."/>
            <person name="Sharp S."/>
            <person name="Simmonds M."/>
            <person name="Skelton J."/>
            <person name="Squares R."/>
            <person name="Squares S."/>
            <person name="Stevens K."/>
            <person name="Unwin L."/>
            <person name="Whitehead S."/>
            <person name="Barrell B.G."/>
            <person name="Maskell D.J."/>
        </authorList>
    </citation>
    <scope>NUCLEOTIDE SEQUENCE [LARGE SCALE GENOMIC DNA]</scope>
    <source>
        <strain>ATCC BAA-588 / NCTC 13252 / RB50</strain>
    </source>
</reference>
<reference key="2">
    <citation type="journal article" date="1987" name="J. Bacteriol.">
        <title>Bordetella parapertussis and Bordetella bronchiseptica contain transcriptionally silent pertussis toxin genes.</title>
        <authorList>
            <person name="Arico B."/>
            <person name="Rappuoli R."/>
        </authorList>
    </citation>
    <scope>TRANSCRIPTIONAL SILENCING</scope>
    <source>
        <strain>ATCC 4617 / NCIB 9935 / NCTC 8344 / NRRL B-140</strain>
    </source>
</reference>
<reference key="3">
    <citation type="journal article" date="1996" name="Infect. Immun.">
        <title>Analysis of proteins encoded by the ptx and ptl genes of Bordetella bronchiseptica and Bordetella parapertussis.</title>
        <authorList>
            <person name="Hausman S.Z."/>
            <person name="Cherry J.D."/>
            <person name="Heininger U."/>
            <person name="Wirsing von Koenig C.H."/>
            <person name="Burns D.L."/>
        </authorList>
    </citation>
    <scope>IN VITRO EXPRESSION FROM A B.PERTUSSIS PROMOTER</scope>
    <source>
        <strain>ATCC 31437 / Bb55</strain>
    </source>
</reference>
<dbReference type="EMBL" id="BX640451">
    <property type="protein sequence ID" value="CAE35264.1"/>
    <property type="molecule type" value="Genomic_DNA"/>
</dbReference>
<dbReference type="RefSeq" id="WP_003815863.1">
    <property type="nucleotide sequence ID" value="NC_002927.3"/>
</dbReference>
<dbReference type="SMR" id="Q7WDT7"/>
<dbReference type="GeneID" id="93206113"/>
<dbReference type="KEGG" id="bbr:BB4900"/>
<dbReference type="eggNOG" id="COG3504">
    <property type="taxonomic scope" value="Bacteria"/>
</dbReference>
<dbReference type="HOGENOM" id="CLU_058585_3_0_4"/>
<dbReference type="Proteomes" id="UP000001027">
    <property type="component" value="Chromosome"/>
</dbReference>
<dbReference type="GO" id="GO:0009279">
    <property type="term" value="C:cell outer membrane"/>
    <property type="evidence" value="ECO:0007669"/>
    <property type="project" value="UniProtKB-SubCell"/>
</dbReference>
<dbReference type="CDD" id="cd06911">
    <property type="entry name" value="VirB9_CagX_TrbG"/>
    <property type="match status" value="1"/>
</dbReference>
<dbReference type="Gene3D" id="2.60.40.2500">
    <property type="match status" value="1"/>
</dbReference>
<dbReference type="InterPro" id="IPR010258">
    <property type="entry name" value="Conjugal_tfr_TrbG/VirB9/CagX"/>
</dbReference>
<dbReference type="InterPro" id="IPR014148">
    <property type="entry name" value="VirB9"/>
</dbReference>
<dbReference type="InterPro" id="IPR033645">
    <property type="entry name" value="VirB9/CagX/TrbG_C"/>
</dbReference>
<dbReference type="InterPro" id="IPR038161">
    <property type="entry name" value="VirB9/CagX/TrbG_C_sf"/>
</dbReference>
<dbReference type="NCBIfam" id="TIGR02781">
    <property type="entry name" value="VirB9"/>
    <property type="match status" value="1"/>
</dbReference>
<dbReference type="Pfam" id="PF03524">
    <property type="entry name" value="CagX"/>
    <property type="match status" value="1"/>
</dbReference>
<accession>Q7WDT7</accession>
<keyword id="KW-0998">Cell outer membrane</keyword>
<keyword id="KW-0472">Membrane</keyword>
<keyword id="KW-0732">Signal</keyword>
<gene>
    <name type="primary">ptlF</name>
    <name type="ordered locus">BB4900</name>
</gene>